<comment type="function">
    <text evidence="1">Catalyzes the methyl esterification of L-isoaspartyl residues in peptides and proteins that result from spontaneous decomposition of normal L-aspartyl and L-asparaginyl residues. It plays a role in the repair and/or degradation of damaged proteins.</text>
</comment>
<comment type="catalytic activity">
    <reaction evidence="1">
        <text>[protein]-L-isoaspartate + S-adenosyl-L-methionine = [protein]-L-isoaspartate alpha-methyl ester + S-adenosyl-L-homocysteine</text>
        <dbReference type="Rhea" id="RHEA:12705"/>
        <dbReference type="Rhea" id="RHEA-COMP:12143"/>
        <dbReference type="Rhea" id="RHEA-COMP:12144"/>
        <dbReference type="ChEBI" id="CHEBI:57856"/>
        <dbReference type="ChEBI" id="CHEBI:59789"/>
        <dbReference type="ChEBI" id="CHEBI:90596"/>
        <dbReference type="ChEBI" id="CHEBI:90598"/>
        <dbReference type="EC" id="2.1.1.77"/>
    </reaction>
</comment>
<comment type="subcellular location">
    <subcellularLocation>
        <location evidence="1">Cytoplasm</location>
    </subcellularLocation>
</comment>
<comment type="similarity">
    <text evidence="1">Belongs to the methyltransferase superfamily. L-isoaspartyl/D-aspartyl protein methyltransferase family.</text>
</comment>
<proteinExistence type="inferred from homology"/>
<keyword id="KW-0963">Cytoplasm</keyword>
<keyword id="KW-0489">Methyltransferase</keyword>
<keyword id="KW-0949">S-adenosyl-L-methionine</keyword>
<keyword id="KW-0808">Transferase</keyword>
<reference key="1">
    <citation type="journal article" date="2010" name="Genome Biol. Evol.">
        <title>Continuing evolution of Burkholderia mallei through genome reduction and large-scale rearrangements.</title>
        <authorList>
            <person name="Losada L."/>
            <person name="Ronning C.M."/>
            <person name="DeShazer D."/>
            <person name="Woods D."/>
            <person name="Fedorova N."/>
            <person name="Kim H.S."/>
            <person name="Shabalina S.A."/>
            <person name="Pearson T.R."/>
            <person name="Brinkac L."/>
            <person name="Tan P."/>
            <person name="Nandi T."/>
            <person name="Crabtree J."/>
            <person name="Badger J."/>
            <person name="Beckstrom-Sternberg S."/>
            <person name="Saqib M."/>
            <person name="Schutzer S.E."/>
            <person name="Keim P."/>
            <person name="Nierman W.C."/>
        </authorList>
    </citation>
    <scope>NUCLEOTIDE SEQUENCE [LARGE SCALE GENOMIC DNA]</scope>
    <source>
        <strain>668</strain>
    </source>
</reference>
<sequence>MSGERAKRFPLALEDLKREPRKPEGRVAERQAAGDAARQRLTAAAAVPAAASPIVPERRAPHGGVFAANPARAKQHAPAAPGAAKRAPQGGAKQGDRSAAPNVALSGALALTSERVRERMVERLRANGVADPRVLAAMSAVPRHMFVDPGLAAQAYEDAALPIGHQQTISKPSVVARMIELAAAGRALERVLEIGTGCGYQAAVLSRVARDVYSIERVKPLYERAKLNLRPLRVPNIRLHYGDGRVGLPAAAPFDAIVIAAAGLDVPRALLEQLAIGGRLVAPVGEQAGEQVLTLVERVAPAQWRESRLDRVFFVPLKSGVI</sequence>
<accession>A3NA64</accession>
<feature type="chain" id="PRO_0000351837" description="Protein-L-isoaspartate O-methyltransferase">
    <location>
        <begin position="1"/>
        <end position="322"/>
    </location>
</feature>
<feature type="region of interest" description="Disordered" evidence="2">
    <location>
        <begin position="1"/>
        <end position="101"/>
    </location>
</feature>
<feature type="compositionally biased region" description="Basic and acidic residues" evidence="2">
    <location>
        <begin position="14"/>
        <end position="29"/>
    </location>
</feature>
<feature type="compositionally biased region" description="Low complexity" evidence="2">
    <location>
        <begin position="33"/>
        <end position="51"/>
    </location>
</feature>
<feature type="compositionally biased region" description="Low complexity" evidence="2">
    <location>
        <begin position="67"/>
        <end position="91"/>
    </location>
</feature>
<feature type="active site" evidence="1">
    <location>
        <position position="170"/>
    </location>
</feature>
<protein>
    <recommendedName>
        <fullName evidence="1">Protein-L-isoaspartate O-methyltransferase</fullName>
        <ecNumber evidence="1">2.1.1.77</ecNumber>
    </recommendedName>
    <alternativeName>
        <fullName evidence="1">L-isoaspartyl protein carboxyl methyltransferase</fullName>
    </alternativeName>
    <alternativeName>
        <fullName evidence="1">Protein L-isoaspartyl methyltransferase</fullName>
    </alternativeName>
    <alternativeName>
        <fullName evidence="1">Protein-beta-aspartate methyltransferase</fullName>
        <shortName evidence="1">PIMT</shortName>
    </alternativeName>
</protein>
<name>PIMT_BURP6</name>
<dbReference type="EC" id="2.1.1.77" evidence="1"/>
<dbReference type="EMBL" id="CP000570">
    <property type="protein sequence ID" value="ABN81508.1"/>
    <property type="molecule type" value="Genomic_DNA"/>
</dbReference>
<dbReference type="RefSeq" id="WP_011851736.1">
    <property type="nucleotide sequence ID" value="NC_009074.1"/>
</dbReference>
<dbReference type="SMR" id="A3NA64"/>
<dbReference type="KEGG" id="bpd:BURPS668_2200"/>
<dbReference type="HOGENOM" id="CLU_055432_1_0_4"/>
<dbReference type="GO" id="GO:0005737">
    <property type="term" value="C:cytoplasm"/>
    <property type="evidence" value="ECO:0007669"/>
    <property type="project" value="UniProtKB-SubCell"/>
</dbReference>
<dbReference type="GO" id="GO:0004719">
    <property type="term" value="F:protein-L-isoaspartate (D-aspartate) O-methyltransferase activity"/>
    <property type="evidence" value="ECO:0007669"/>
    <property type="project" value="UniProtKB-UniRule"/>
</dbReference>
<dbReference type="GO" id="GO:0032259">
    <property type="term" value="P:methylation"/>
    <property type="evidence" value="ECO:0007669"/>
    <property type="project" value="UniProtKB-KW"/>
</dbReference>
<dbReference type="GO" id="GO:0036211">
    <property type="term" value="P:protein modification process"/>
    <property type="evidence" value="ECO:0007669"/>
    <property type="project" value="UniProtKB-UniRule"/>
</dbReference>
<dbReference type="GO" id="GO:0030091">
    <property type="term" value="P:protein repair"/>
    <property type="evidence" value="ECO:0007669"/>
    <property type="project" value="UniProtKB-UniRule"/>
</dbReference>
<dbReference type="CDD" id="cd02440">
    <property type="entry name" value="AdoMet_MTases"/>
    <property type="match status" value="1"/>
</dbReference>
<dbReference type="FunFam" id="3.40.50.150:FF:000010">
    <property type="entry name" value="Protein-L-isoaspartate O-methyltransferase"/>
    <property type="match status" value="1"/>
</dbReference>
<dbReference type="Gene3D" id="3.40.50.150">
    <property type="entry name" value="Vaccinia Virus protein VP39"/>
    <property type="match status" value="1"/>
</dbReference>
<dbReference type="HAMAP" id="MF_00090">
    <property type="entry name" value="PIMT"/>
    <property type="match status" value="1"/>
</dbReference>
<dbReference type="InterPro" id="IPR000682">
    <property type="entry name" value="PCMT"/>
</dbReference>
<dbReference type="InterPro" id="IPR029063">
    <property type="entry name" value="SAM-dependent_MTases_sf"/>
</dbReference>
<dbReference type="NCBIfam" id="TIGR00080">
    <property type="entry name" value="pimt"/>
    <property type="match status" value="1"/>
</dbReference>
<dbReference type="NCBIfam" id="NF001453">
    <property type="entry name" value="PRK00312.1"/>
    <property type="match status" value="1"/>
</dbReference>
<dbReference type="PANTHER" id="PTHR11579">
    <property type="entry name" value="PROTEIN-L-ISOASPARTATE O-METHYLTRANSFERASE"/>
    <property type="match status" value="1"/>
</dbReference>
<dbReference type="PANTHER" id="PTHR11579:SF0">
    <property type="entry name" value="PROTEIN-L-ISOASPARTATE(D-ASPARTATE) O-METHYLTRANSFERASE"/>
    <property type="match status" value="1"/>
</dbReference>
<dbReference type="Pfam" id="PF01135">
    <property type="entry name" value="PCMT"/>
    <property type="match status" value="1"/>
</dbReference>
<dbReference type="SUPFAM" id="SSF53335">
    <property type="entry name" value="S-adenosyl-L-methionine-dependent methyltransferases"/>
    <property type="match status" value="1"/>
</dbReference>
<dbReference type="PROSITE" id="PS01279">
    <property type="entry name" value="PCMT"/>
    <property type="match status" value="1"/>
</dbReference>
<evidence type="ECO:0000255" key="1">
    <source>
        <dbReference type="HAMAP-Rule" id="MF_00090"/>
    </source>
</evidence>
<evidence type="ECO:0000256" key="2">
    <source>
        <dbReference type="SAM" id="MobiDB-lite"/>
    </source>
</evidence>
<gene>
    <name evidence="1" type="primary">pcm</name>
    <name type="ordered locus">BURPS668_2200</name>
</gene>
<organism>
    <name type="scientific">Burkholderia pseudomallei (strain 668)</name>
    <dbReference type="NCBI Taxonomy" id="320373"/>
    <lineage>
        <taxon>Bacteria</taxon>
        <taxon>Pseudomonadati</taxon>
        <taxon>Pseudomonadota</taxon>
        <taxon>Betaproteobacteria</taxon>
        <taxon>Burkholderiales</taxon>
        <taxon>Burkholderiaceae</taxon>
        <taxon>Burkholderia</taxon>
        <taxon>pseudomallei group</taxon>
    </lineage>
</organism>